<dbReference type="EC" id="3.2.1.21"/>
<dbReference type="EMBL" id="AB253326">
    <property type="protein sequence ID" value="BAE87008.1"/>
    <property type="molecule type" value="mRNA"/>
</dbReference>
<dbReference type="PDB" id="2E3Z">
    <property type="method" value="X-ray"/>
    <property type="resolution" value="1.50 A"/>
    <property type="chains" value="A/B=1-462"/>
</dbReference>
<dbReference type="PDB" id="2E40">
    <property type="method" value="X-ray"/>
    <property type="resolution" value="1.90 A"/>
    <property type="chains" value="A/B=1-462"/>
</dbReference>
<dbReference type="PDBsum" id="2E3Z"/>
<dbReference type="PDBsum" id="2E40"/>
<dbReference type="SMR" id="Q25BW5"/>
<dbReference type="CAZy" id="GH1">
    <property type="family name" value="Glycoside Hydrolase Family 1"/>
</dbReference>
<dbReference type="VEuPathDB" id="FungiDB:AGR57_5510"/>
<dbReference type="BRENDA" id="3.2.1.21">
    <property type="organism ID" value="1380"/>
</dbReference>
<dbReference type="SABIO-RK" id="Q25BW5"/>
<dbReference type="EvolutionaryTrace" id="Q25BW5"/>
<dbReference type="GO" id="GO:0008422">
    <property type="term" value="F:beta-glucosidase activity"/>
    <property type="evidence" value="ECO:0000314"/>
    <property type="project" value="UniProtKB"/>
</dbReference>
<dbReference type="GO" id="GO:0080079">
    <property type="term" value="F:cellobiose glucosidase activity"/>
    <property type="evidence" value="ECO:0000314"/>
    <property type="project" value="UniProtKB"/>
</dbReference>
<dbReference type="GO" id="GO:0030245">
    <property type="term" value="P:cellulose catabolic process"/>
    <property type="evidence" value="ECO:0000314"/>
    <property type="project" value="UniProtKB"/>
</dbReference>
<dbReference type="FunFam" id="3.20.20.80:FF:000011">
    <property type="entry name" value="Cytosolic beta-glucosidase"/>
    <property type="match status" value="1"/>
</dbReference>
<dbReference type="Gene3D" id="3.20.20.80">
    <property type="entry name" value="Glycosidases"/>
    <property type="match status" value="1"/>
</dbReference>
<dbReference type="InterPro" id="IPR001360">
    <property type="entry name" value="Glyco_hydro_1"/>
</dbReference>
<dbReference type="InterPro" id="IPR017736">
    <property type="entry name" value="Glyco_hydro_1_beta-glucosidase"/>
</dbReference>
<dbReference type="InterPro" id="IPR033132">
    <property type="entry name" value="Glyco_hydro_1_N_CS"/>
</dbReference>
<dbReference type="InterPro" id="IPR017853">
    <property type="entry name" value="Glycoside_hydrolase_SF"/>
</dbReference>
<dbReference type="NCBIfam" id="TIGR03356">
    <property type="entry name" value="BGL"/>
    <property type="match status" value="1"/>
</dbReference>
<dbReference type="PANTHER" id="PTHR10353">
    <property type="entry name" value="GLYCOSYL HYDROLASE"/>
    <property type="match status" value="1"/>
</dbReference>
<dbReference type="PANTHER" id="PTHR10353:SF36">
    <property type="entry name" value="LP05116P"/>
    <property type="match status" value="1"/>
</dbReference>
<dbReference type="Pfam" id="PF00232">
    <property type="entry name" value="Glyco_hydro_1"/>
    <property type="match status" value="1"/>
</dbReference>
<dbReference type="PRINTS" id="PR00131">
    <property type="entry name" value="GLHYDRLASE1"/>
</dbReference>
<dbReference type="SUPFAM" id="SSF51445">
    <property type="entry name" value="(Trans)glycosidases"/>
    <property type="match status" value="1"/>
</dbReference>
<dbReference type="PROSITE" id="PS00653">
    <property type="entry name" value="GLYCOSYL_HYDROL_F1_2"/>
    <property type="match status" value="1"/>
</dbReference>
<keyword id="KW-0002">3D-structure</keyword>
<keyword id="KW-0119">Carbohydrate metabolism</keyword>
<keyword id="KW-0136">Cellulose degradation</keyword>
<keyword id="KW-0326">Glycosidase</keyword>
<keyword id="KW-0378">Hydrolase</keyword>
<keyword id="KW-0624">Polysaccharide degradation</keyword>
<reference evidence="6 7" key="1">
    <citation type="journal article" date="2006" name="Appl. Microbiol. Biotechnol.">
        <title>Molecular cloning and characterization of two intracellular beta-glucosidases belonging to glycoside hydrolase family 1 from the basidiomycete Phanerochaete chrysosporium.</title>
        <authorList>
            <person name="Tsukada T."/>
            <person name="Igarashi K."/>
            <person name="Yoshida M."/>
            <person name="Samejima M."/>
        </authorList>
    </citation>
    <scope>NUCLEOTIDE SEQUENCE [MRNA]</scope>
    <scope>FUNCTION</scope>
    <scope>CATALYTIC ACTIVITY</scope>
    <scope>BIOPHYSICOCHEMICAL PROPERTIES</scope>
    <scope>INDUCTION</scope>
    <source>
        <strain evidence="7">K-3</strain>
        <tissue evidence="2">Mycelium</tissue>
    </source>
</reference>
<reference evidence="6" key="2">
    <citation type="journal article" date="2008" name="Biotechnol. Bioeng.">
        <title>Role of subsite +1 residues in pH dependence and catalytic activity of the glycoside hydrolase family 1 beta-glucosidase BGL1A from the basidiomycete Phanerochaete chrysosporium.</title>
        <authorList>
            <person name="Tsukada T."/>
            <person name="Igarashi K."/>
            <person name="Fushinobu S."/>
            <person name="Samejima M."/>
        </authorList>
    </citation>
    <scope>BIOPHYSICOCHEMICAL PROPERTIES</scope>
    <scope>MUTAGENESIS OF VAL-173; MET-177; ASP-229; HIS-231 AND LYS-253</scope>
    <source>
        <strain evidence="4">K-3</strain>
        <tissue evidence="4">Mycelium</tissue>
    </source>
</reference>
<reference evidence="6" key="3">
    <citation type="journal article" date="2007" name="FEBS Lett.">
        <title>Crystal structure of intracellular family 1 beta-glucosidase BGL1A from the basidiomycete Phanerochaete chrysosporium.</title>
        <authorList>
            <person name="Nijikken Y."/>
            <person name="Tsukada T."/>
            <person name="Igarashi K."/>
            <person name="Samejima M."/>
            <person name="Wakagi T."/>
            <person name="Shoun H."/>
            <person name="Fushinobu S."/>
        </authorList>
    </citation>
    <scope>X-RAY CRYSTALLOGRAPHY (1.5 ANGSTROMS) IN COMPLEX WITH SUBSTRATE</scope>
    <source>
        <strain evidence="3">K-3</strain>
        <tissue evidence="3">Mycelium</tissue>
    </source>
</reference>
<accession>Q25BW5</accession>
<proteinExistence type="evidence at protein level"/>
<feature type="chain" id="PRO_0000390787" description="Beta-glucosidase 1A">
    <location>
        <begin position="1"/>
        <end position="462"/>
    </location>
</feature>
<feature type="active site" description="Proton donor" evidence="3">
    <location>
        <position position="170"/>
    </location>
</feature>
<feature type="active site" description="Nucleophile" evidence="3">
    <location>
        <position position="365"/>
    </location>
</feature>
<feature type="binding site" evidence="3">
    <location>
        <position position="20"/>
    </location>
    <ligand>
        <name>substrate</name>
    </ligand>
</feature>
<feature type="binding site" evidence="3">
    <location>
        <position position="123"/>
    </location>
    <ligand>
        <name>substrate</name>
    </ligand>
</feature>
<feature type="binding site" evidence="3">
    <location>
        <position position="169"/>
    </location>
    <ligand>
        <name>substrate</name>
    </ligand>
</feature>
<feature type="binding site" evidence="3">
    <location>
        <position position="301"/>
    </location>
    <ligand>
        <name>substrate</name>
    </ligand>
</feature>
<feature type="binding site" evidence="3">
    <location>
        <position position="415"/>
    </location>
    <ligand>
        <name>substrate</name>
    </ligand>
</feature>
<feature type="binding site">
    <location>
        <begin position="422"/>
        <end position="423"/>
    </location>
    <ligand>
        <name>substrate</name>
    </ligand>
</feature>
<feature type="mutagenesis site" description="2-fold decrease in affinity for cellobiose." evidence="4">
    <original>V</original>
    <variation>C</variation>
    <location>
        <position position="173"/>
    </location>
</feature>
<feature type="mutagenesis site" description="Small decrease in affinity for cellobiose." evidence="4">
    <original>M</original>
    <variation>L</variation>
    <location>
        <position position="177"/>
    </location>
</feature>
<feature type="mutagenesis site" description="17-fold decrease in affinity for cellobiose and displays more acidic optimum pH than wild-type. No effect on optimum pH; when associated with A-253." evidence="4">
    <original>D</original>
    <variation>N</variation>
    <location>
        <position position="229"/>
    </location>
</feature>
<feature type="mutagenesis site" description="3-fold decrease in affinity for cellobiose." evidence="4">
    <original>H</original>
    <variation>D</variation>
    <location>
        <position position="231"/>
    </location>
</feature>
<feature type="mutagenesis site" description="7-fold decrease in affinity for cellobiose. No effect on optimum pH; when associated with N-229." evidence="4">
    <original>K</original>
    <variation>A</variation>
    <location>
        <position position="253"/>
    </location>
</feature>
<feature type="strand" evidence="8">
    <location>
        <begin position="11"/>
        <end position="15"/>
    </location>
</feature>
<feature type="helix" evidence="8">
    <location>
        <begin position="18"/>
        <end position="21"/>
    </location>
</feature>
<feature type="helix" evidence="8">
    <location>
        <begin position="27"/>
        <end position="29"/>
    </location>
</feature>
<feature type="helix" evidence="8">
    <location>
        <begin position="34"/>
        <end position="38"/>
    </location>
</feature>
<feature type="strand" evidence="8">
    <location>
        <begin position="51"/>
        <end position="53"/>
    </location>
</feature>
<feature type="turn" evidence="8">
    <location>
        <begin position="57"/>
        <end position="60"/>
    </location>
</feature>
<feature type="helix" evidence="8">
    <location>
        <begin position="61"/>
        <end position="70"/>
    </location>
</feature>
<feature type="strand" evidence="8">
    <location>
        <begin position="74"/>
        <end position="79"/>
    </location>
</feature>
<feature type="helix" evidence="8">
    <location>
        <begin position="82"/>
        <end position="85"/>
    </location>
</feature>
<feature type="helix" evidence="8">
    <location>
        <begin position="97"/>
        <end position="113"/>
    </location>
</feature>
<feature type="strand" evidence="8">
    <location>
        <begin position="116"/>
        <end position="124"/>
    </location>
</feature>
<feature type="helix" evidence="8">
    <location>
        <begin position="128"/>
        <end position="134"/>
    </location>
</feature>
<feature type="helix" evidence="8">
    <location>
        <begin position="136"/>
        <end position="138"/>
    </location>
</feature>
<feature type="helix" evidence="8">
    <location>
        <begin position="140"/>
        <end position="158"/>
    </location>
</feature>
<feature type="turn" evidence="8">
    <location>
        <begin position="159"/>
        <end position="161"/>
    </location>
</feature>
<feature type="strand" evidence="8">
    <location>
        <begin position="164"/>
        <end position="169"/>
    </location>
</feature>
<feature type="helix" evidence="8">
    <location>
        <begin position="171"/>
        <end position="179"/>
    </location>
</feature>
<feature type="helix" evidence="8">
    <location>
        <begin position="193"/>
        <end position="215"/>
    </location>
</feature>
<feature type="helix" evidence="8">
    <location>
        <begin position="217"/>
        <end position="220"/>
    </location>
</feature>
<feature type="strand" evidence="8">
    <location>
        <begin position="223"/>
        <end position="229"/>
    </location>
</feature>
<feature type="strand" evidence="8">
    <location>
        <begin position="232"/>
        <end position="239"/>
    </location>
</feature>
<feature type="helix" evidence="8">
    <location>
        <begin position="240"/>
        <end position="253"/>
    </location>
</feature>
<feature type="helix" evidence="8">
    <location>
        <begin position="255"/>
        <end position="263"/>
    </location>
</feature>
<feature type="helix" evidence="8">
    <location>
        <begin position="268"/>
        <end position="274"/>
    </location>
</feature>
<feature type="helix" evidence="8">
    <location>
        <begin position="275"/>
        <end position="277"/>
    </location>
</feature>
<feature type="helix" evidence="8">
    <location>
        <begin position="283"/>
        <end position="289"/>
    </location>
</feature>
<feature type="strand" evidence="8">
    <location>
        <begin position="294"/>
        <end position="299"/>
    </location>
</feature>
<feature type="strand" evidence="8">
    <location>
        <begin position="303"/>
        <end position="308"/>
    </location>
</feature>
<feature type="helix" evidence="8">
    <location>
        <begin position="313"/>
        <end position="315"/>
    </location>
</feature>
<feature type="strand" evidence="8">
    <location>
        <begin position="317"/>
        <end position="323"/>
    </location>
</feature>
<feature type="strand" evidence="8">
    <location>
        <begin position="329"/>
        <end position="331"/>
    </location>
</feature>
<feature type="strand" evidence="8">
    <location>
        <begin position="333"/>
        <end position="336"/>
    </location>
</feature>
<feature type="helix" evidence="8">
    <location>
        <begin position="343"/>
        <end position="357"/>
    </location>
</feature>
<feature type="strand" evidence="8">
    <location>
        <begin position="361"/>
        <end position="366"/>
    </location>
</feature>
<feature type="helix" evidence="8">
    <location>
        <begin position="373"/>
        <end position="375"/>
    </location>
</feature>
<feature type="helix" evidence="8">
    <location>
        <begin position="378"/>
        <end position="381"/>
    </location>
</feature>
<feature type="helix" evidence="8">
    <location>
        <begin position="385"/>
        <end position="403"/>
    </location>
</feature>
<feature type="strand" evidence="8">
    <location>
        <begin position="409"/>
        <end position="415"/>
    </location>
</feature>
<feature type="helix" evidence="8">
    <location>
        <begin position="423"/>
        <end position="425"/>
    </location>
</feature>
<feature type="strand" evidence="8">
    <location>
        <begin position="433"/>
        <end position="436"/>
    </location>
</feature>
<feature type="turn" evidence="8">
    <location>
        <begin position="438"/>
        <end position="440"/>
    </location>
</feature>
<feature type="strand" evidence="8">
    <location>
        <begin position="443"/>
        <end position="445"/>
    </location>
</feature>
<feature type="helix" evidence="8">
    <location>
        <begin position="447"/>
        <end position="459"/>
    </location>
</feature>
<evidence type="ECO:0000255" key="1"/>
<evidence type="ECO:0000269" key="2">
    <source>
    </source>
</evidence>
<evidence type="ECO:0000269" key="3">
    <source>
    </source>
</evidence>
<evidence type="ECO:0000269" key="4">
    <source>
    </source>
</evidence>
<evidence type="ECO:0000303" key="5">
    <source>
    </source>
</evidence>
<evidence type="ECO:0000305" key="6"/>
<evidence type="ECO:0000312" key="7">
    <source>
        <dbReference type="EMBL" id="BAE87008.1"/>
    </source>
</evidence>
<evidence type="ECO:0007829" key="8">
    <source>
        <dbReference type="PDB" id="2E3Z"/>
    </source>
</evidence>
<name>BGL1A_PHACH</name>
<gene>
    <name evidence="7" type="primary">BGL1A</name>
</gene>
<organism>
    <name type="scientific">Phanerodontia chrysosporium</name>
    <name type="common">White-rot fungus</name>
    <name type="synonym">Sporotrichum pruinosum</name>
    <dbReference type="NCBI Taxonomy" id="2822231"/>
    <lineage>
        <taxon>Eukaryota</taxon>
        <taxon>Fungi</taxon>
        <taxon>Dikarya</taxon>
        <taxon>Basidiomycota</taxon>
        <taxon>Agaricomycotina</taxon>
        <taxon>Agaricomycetes</taxon>
        <taxon>Polyporales</taxon>
        <taxon>Phanerochaetaceae</taxon>
        <taxon>Phanerodontia</taxon>
    </lineage>
</organism>
<sequence length="462" mass="52599">MSAAKLPKSFVWGYATAAYQIEGSPDKDGREPSIWDTFCKAPGKIADGSSGDVATDSYNRWREDVQLLKSYGVKAYRFSLSWSRIIPKGGRSDPVNGAGIKHYRTLIEELVKEGITPFVTLYHWDLPQALDDRYGGWLNKEEAIQDFTNYAKLCFESFGDLVQNWITFNEPWVISVMGYGNGIFAPGHVSNTEPWIVSHHIILAHAHAVKLYRDEFKEKQGGQIGITLDSHWLIPYDDTDASKEATLRAMEFKLGRFANPIYKGEYPPRIKKILGDRLPEFTPEEIELVKGSSDFFGLNTYTTHLVQDGGSDELAGFVKTGHTRADGTQLGTQSDMGWLQTYGPGFRWLLNYLWKAYDKPVYVTENGFPVKGENDLPVEQAVDDTDRQAYYRDYTEALLQAVTEDGADVRGYFGWSLLDNFEWAEGYKVRFGVTHVDYETQKRTPKKSAEFLSRWFKEHIEE</sequence>
<comment type="function">
    <text evidence="2">Plays an important role in cellulose degradation. Shows hydrolytic activity against several glycosidic compounds.</text>
</comment>
<comment type="catalytic activity">
    <reaction evidence="2">
        <text>Hydrolysis of terminal, non-reducing beta-D-glucosyl residues with release of beta-D-glucose.</text>
        <dbReference type="EC" id="3.2.1.21"/>
    </reaction>
</comment>
<comment type="biophysicochemical properties">
    <kinetics>
        <KM evidence="2 4">6.8 mM for cellobiose</KM>
        <KM evidence="2 4">0.229 mM for p-nitrophenyl-beta-D-glucoside (pNP-Glu)</KM>
        <KM evidence="2 4">10.2 mM for p-nitrophenyl-beta-D-galactoside (pNP-Gal)</KM>
        <KM evidence="2 4">0.752 mM for p-nitrophenyl-beta-D-xyloside (pNP-Xyl)</KM>
    </kinetics>
    <phDependence>
        <text evidence="2 4">Optimum pH is 6.0-6.5.</text>
    </phDependence>
</comment>
<comment type="induction">
    <text evidence="2">Expressed constitutively in cellobiose and glucose cultures.</text>
</comment>
<comment type="similarity">
    <text evidence="1">Belongs to the glycosyl hydrolase 1 family.</text>
</comment>
<protein>
    <recommendedName>
        <fullName evidence="5 7">Beta-glucosidase 1A</fullName>
        <ecNumber>3.2.1.21</ecNumber>
    </recommendedName>
    <alternativeName>
        <fullName evidence="5">Cellobiase 1A</fullName>
    </alternativeName>
</protein>